<gene>
    <name type="primary">OPG055</name>
    <name type="ORF">F11L</name>
</gene>
<keyword id="KW-0426">Late protein</keyword>
<keyword id="KW-1185">Reference proteome</keyword>
<dbReference type="EMBL" id="M35027">
    <property type="protein sequence ID" value="AAA48028.1"/>
    <property type="molecule type" value="Genomic_DNA"/>
</dbReference>
<dbReference type="PIR" id="G42507">
    <property type="entry name" value="G42507"/>
</dbReference>
<dbReference type="SMR" id="P21052"/>
<dbReference type="Proteomes" id="UP000008269">
    <property type="component" value="Segment"/>
</dbReference>
<dbReference type="InterPro" id="IPR007027">
    <property type="entry name" value="Poxvirus_F11"/>
</dbReference>
<dbReference type="Pfam" id="PF04943">
    <property type="entry name" value="Pox_F11"/>
    <property type="match status" value="1"/>
</dbReference>
<dbReference type="PIRSF" id="PIRSF015981">
    <property type="entry name" value="VAC_F11L"/>
    <property type="match status" value="1"/>
</dbReference>
<evidence type="ECO:0000250" key="1">
    <source>
        <dbReference type="UniProtKB" id="Q80HX7"/>
    </source>
</evidence>
<evidence type="ECO:0000305" key="2"/>
<proteinExistence type="inferred from homology"/>
<sequence>MGFCIPLRSKMLKRGSRKSSSILARRPTPKKMNIVTDLENRLKKNSYIENTNQGNILMDSIFVSTMPVETLFGSYITDDSDDYELKDLLNVTYNIKPVIVPDIKLDAVLDRDGNFRPADCFLVKLKHRDGFTKGALYLGHSAGFTATICLKNEGVSGLYIPGTSVIRSNICQGDTIVSRSSRGVQFLPQIGGEAIFLIVSLCPTKKLVETGFVIPEISSNDNAKIAARILSEKRKDTIAHIDTLIQHRQQLELAYYNSCMLTEFLHYCNSYADTIKESLLKETIQKDINITHTNITTLLNETAKVIKLVKSLVDKEDTDIVNNFITKEIKNCGGVKNRDKIVNSLSLSNLDFRL</sequence>
<feature type="chain" id="PRO_0000099498" description="Protein OPG055">
    <location>
        <begin position="1"/>
        <end position="354"/>
    </location>
</feature>
<organismHost>
    <name type="scientific">Homo sapiens</name>
    <name type="common">Human</name>
    <dbReference type="NCBI Taxonomy" id="9606"/>
</organismHost>
<accession>P21052</accession>
<comment type="function">
    <text evidence="1">Stimulates increases in peripheral microtubule dynamics and may increase the motility of the infected cells, contributing to cell-to-cell spread of the virus. Seems to inhibit the signaling via the GTPase RHOA and DIAPH1/mDia.</text>
</comment>
<comment type="induction">
    <text evidence="1">Expressed in the late phase of the viral replicative cycle.</text>
</comment>
<comment type="similarity">
    <text evidence="2">Belongs to the orthopoxvirus OPG055 family.</text>
</comment>
<reference key="1">
    <citation type="journal article" date="1990" name="Virology">
        <title>The complete DNA sequence of vaccinia virus.</title>
        <authorList>
            <person name="Goebel S.J."/>
            <person name="Johnson G.P."/>
            <person name="Perkus M.E."/>
            <person name="Davis S.W."/>
            <person name="Winslow J.P."/>
            <person name="Paoletti E."/>
        </authorList>
    </citation>
    <scope>NUCLEOTIDE SEQUENCE [LARGE SCALE GENOMIC DNA]</scope>
</reference>
<reference key="2">
    <citation type="journal article" date="1990" name="Virology">
        <title>Appendix to 'The complete DNA sequence of vaccinia virus'.</title>
        <authorList>
            <person name="Goebel S.J."/>
            <person name="Johnson G.P."/>
            <person name="Perkus M.E."/>
            <person name="Davis S.W."/>
            <person name="Winslow J.P."/>
            <person name="Paoletti E."/>
        </authorList>
    </citation>
    <scope>NUCLEOTIDE SEQUENCE [LARGE SCALE GENOMIC DNA]</scope>
</reference>
<protein>
    <recommendedName>
        <fullName>Protein OPG055</fullName>
    </recommendedName>
    <alternativeName>
        <fullName>Protein F11</fullName>
    </alternativeName>
</protein>
<name>PG055_VACCC</name>
<organism>
    <name type="scientific">Vaccinia virus (strain Copenhagen)</name>
    <name type="common">VACV</name>
    <dbReference type="NCBI Taxonomy" id="10249"/>
    <lineage>
        <taxon>Viruses</taxon>
        <taxon>Varidnaviria</taxon>
        <taxon>Bamfordvirae</taxon>
        <taxon>Nucleocytoviricota</taxon>
        <taxon>Pokkesviricetes</taxon>
        <taxon>Chitovirales</taxon>
        <taxon>Poxviridae</taxon>
        <taxon>Chordopoxvirinae</taxon>
        <taxon>Orthopoxvirus</taxon>
        <taxon>Vaccinia virus</taxon>
    </lineage>
</organism>